<gene>
    <name evidence="1" type="primary">ureG</name>
    <name type="ordered locus">BB4320</name>
</gene>
<proteinExistence type="inferred from homology"/>
<reference key="1">
    <citation type="journal article" date="1998" name="Gene">
        <title>Characterisation of the urease gene cluster in Bordetella bronchiseptica.</title>
        <authorList>
            <person name="McMillan D.J."/>
            <person name="Mau M."/>
            <person name="Walker M.J."/>
        </authorList>
    </citation>
    <scope>NUCLEOTIDE SEQUENCE [GENOMIC DNA]</scope>
    <source>
        <strain>BB7866</strain>
    </source>
</reference>
<reference key="2">
    <citation type="journal article" date="2003" name="Nat. Genet.">
        <title>Comparative analysis of the genome sequences of Bordetella pertussis, Bordetella parapertussis and Bordetella bronchiseptica.</title>
        <authorList>
            <person name="Parkhill J."/>
            <person name="Sebaihia M."/>
            <person name="Preston A."/>
            <person name="Murphy L.D."/>
            <person name="Thomson N.R."/>
            <person name="Harris D.E."/>
            <person name="Holden M.T.G."/>
            <person name="Churcher C.M."/>
            <person name="Bentley S.D."/>
            <person name="Mungall K.L."/>
            <person name="Cerdeno-Tarraga A.-M."/>
            <person name="Temple L."/>
            <person name="James K.D."/>
            <person name="Harris B."/>
            <person name="Quail M.A."/>
            <person name="Achtman M."/>
            <person name="Atkin R."/>
            <person name="Baker S."/>
            <person name="Basham D."/>
            <person name="Bason N."/>
            <person name="Cherevach I."/>
            <person name="Chillingworth T."/>
            <person name="Collins M."/>
            <person name="Cronin A."/>
            <person name="Davis P."/>
            <person name="Doggett J."/>
            <person name="Feltwell T."/>
            <person name="Goble A."/>
            <person name="Hamlin N."/>
            <person name="Hauser H."/>
            <person name="Holroyd S."/>
            <person name="Jagels K."/>
            <person name="Leather S."/>
            <person name="Moule S."/>
            <person name="Norberczak H."/>
            <person name="O'Neil S."/>
            <person name="Ormond D."/>
            <person name="Price C."/>
            <person name="Rabbinowitsch E."/>
            <person name="Rutter S."/>
            <person name="Sanders M."/>
            <person name="Saunders D."/>
            <person name="Seeger K."/>
            <person name="Sharp S."/>
            <person name="Simmonds M."/>
            <person name="Skelton J."/>
            <person name="Squares R."/>
            <person name="Squares S."/>
            <person name="Stevens K."/>
            <person name="Unwin L."/>
            <person name="Whitehead S."/>
            <person name="Barrell B.G."/>
            <person name="Maskell D.J."/>
        </authorList>
    </citation>
    <scope>NUCLEOTIDE SEQUENCE [LARGE SCALE GENOMIC DNA]</scope>
    <source>
        <strain>ATCC BAA-588 / NCTC 13252 / RB50</strain>
    </source>
</reference>
<accession>P0A4R7</accession>
<accession>O06709</accession>
<sequence>MHDISSLTTRTKTLPPLRVGVGGPVGSGKTTLLEMVCKAMYPQFDLIAITNDIYTKEDQRLLTLSGALPPERILGVETGGCPHTAIREDASINLIAIDQMLEQFPDADIVFVESGGDNLAATFSPELSDLTLYIIDVASGEKIPRKGGPGITKSDLFIINKTDLAPYVGADLAVMEADTRRMRGDKPFVMCNLKTGDGLDQVIAFLKTEGLFRG</sequence>
<name>UREG_BORBR</name>
<comment type="function">
    <text evidence="1">Facilitates the functional incorporation of the urease nickel metallocenter. This process requires GTP hydrolysis, probably effectuated by UreG.</text>
</comment>
<comment type="subunit">
    <text evidence="1">Homodimer. UreD, UreF and UreG form a complex that acts as a GTP-hydrolysis-dependent molecular chaperone, activating the urease apoprotein by helping to assemble the nickel containing metallocenter of UreC. The UreE protein probably delivers the nickel.</text>
</comment>
<comment type="subcellular location">
    <subcellularLocation>
        <location evidence="1">Cytoplasm</location>
    </subcellularLocation>
</comment>
<comment type="similarity">
    <text evidence="1">Belongs to the SIMIBI class G3E GTPase family. UreG subfamily.</text>
</comment>
<organism>
    <name type="scientific">Bordetella bronchiseptica (strain ATCC BAA-588 / NCTC 13252 / RB50)</name>
    <name type="common">Alcaligenes bronchisepticus</name>
    <dbReference type="NCBI Taxonomy" id="257310"/>
    <lineage>
        <taxon>Bacteria</taxon>
        <taxon>Pseudomonadati</taxon>
        <taxon>Pseudomonadota</taxon>
        <taxon>Betaproteobacteria</taxon>
        <taxon>Burkholderiales</taxon>
        <taxon>Alcaligenaceae</taxon>
        <taxon>Bordetella</taxon>
    </lineage>
</organism>
<keyword id="KW-0143">Chaperone</keyword>
<keyword id="KW-0963">Cytoplasm</keyword>
<keyword id="KW-0342">GTP-binding</keyword>
<keyword id="KW-0996">Nickel insertion</keyword>
<keyword id="KW-0547">Nucleotide-binding</keyword>
<evidence type="ECO:0000255" key="1">
    <source>
        <dbReference type="HAMAP-Rule" id="MF_01389"/>
    </source>
</evidence>
<protein>
    <recommendedName>
        <fullName evidence="1">Urease accessory protein UreG</fullName>
    </recommendedName>
</protein>
<feature type="chain" id="PRO_0000067662" description="Urease accessory protein UreG">
    <location>
        <begin position="1"/>
        <end position="214"/>
    </location>
</feature>
<feature type="binding site" evidence="1">
    <location>
        <begin position="23"/>
        <end position="30"/>
    </location>
    <ligand>
        <name>GTP</name>
        <dbReference type="ChEBI" id="CHEBI:37565"/>
    </ligand>
</feature>
<dbReference type="EMBL" id="AF000579">
    <property type="protein sequence ID" value="AAC46130.1"/>
    <property type="molecule type" value="Genomic_DNA"/>
</dbReference>
<dbReference type="EMBL" id="BX640450">
    <property type="protein sequence ID" value="CAE34683.1"/>
    <property type="molecule type" value="Genomic_DNA"/>
</dbReference>
<dbReference type="RefSeq" id="WP_003814817.1">
    <property type="nucleotide sequence ID" value="NC_002927.3"/>
</dbReference>
<dbReference type="SMR" id="P0A4R7"/>
<dbReference type="GeneID" id="93205650"/>
<dbReference type="KEGG" id="bbr:BB4320"/>
<dbReference type="eggNOG" id="COG0378">
    <property type="taxonomic scope" value="Bacteria"/>
</dbReference>
<dbReference type="HOGENOM" id="CLU_072144_1_0_4"/>
<dbReference type="Proteomes" id="UP000001027">
    <property type="component" value="Chromosome"/>
</dbReference>
<dbReference type="GO" id="GO:0005737">
    <property type="term" value="C:cytoplasm"/>
    <property type="evidence" value="ECO:0007669"/>
    <property type="project" value="UniProtKB-SubCell"/>
</dbReference>
<dbReference type="GO" id="GO:0005525">
    <property type="term" value="F:GTP binding"/>
    <property type="evidence" value="ECO:0007669"/>
    <property type="project" value="UniProtKB-KW"/>
</dbReference>
<dbReference type="GO" id="GO:0003924">
    <property type="term" value="F:GTPase activity"/>
    <property type="evidence" value="ECO:0007669"/>
    <property type="project" value="InterPro"/>
</dbReference>
<dbReference type="GO" id="GO:0016151">
    <property type="term" value="F:nickel cation binding"/>
    <property type="evidence" value="ECO:0007669"/>
    <property type="project" value="UniProtKB-UniRule"/>
</dbReference>
<dbReference type="GO" id="GO:0043419">
    <property type="term" value="P:urea catabolic process"/>
    <property type="evidence" value="ECO:0007669"/>
    <property type="project" value="InterPro"/>
</dbReference>
<dbReference type="CDD" id="cd05540">
    <property type="entry name" value="UreG"/>
    <property type="match status" value="1"/>
</dbReference>
<dbReference type="FunFam" id="3.40.50.300:FF:000208">
    <property type="entry name" value="Urease accessory protein UreG"/>
    <property type="match status" value="1"/>
</dbReference>
<dbReference type="Gene3D" id="3.40.50.300">
    <property type="entry name" value="P-loop containing nucleotide triphosphate hydrolases"/>
    <property type="match status" value="1"/>
</dbReference>
<dbReference type="HAMAP" id="MF_01389">
    <property type="entry name" value="UreG"/>
    <property type="match status" value="1"/>
</dbReference>
<dbReference type="InterPro" id="IPR003495">
    <property type="entry name" value="CobW/HypB/UreG_nucleotide-bd"/>
</dbReference>
<dbReference type="InterPro" id="IPR027417">
    <property type="entry name" value="P-loop_NTPase"/>
</dbReference>
<dbReference type="InterPro" id="IPR004400">
    <property type="entry name" value="UreG"/>
</dbReference>
<dbReference type="NCBIfam" id="TIGR00101">
    <property type="entry name" value="ureG"/>
    <property type="match status" value="1"/>
</dbReference>
<dbReference type="PANTHER" id="PTHR31715">
    <property type="entry name" value="UREASE ACCESSORY PROTEIN G"/>
    <property type="match status" value="1"/>
</dbReference>
<dbReference type="PANTHER" id="PTHR31715:SF0">
    <property type="entry name" value="UREASE ACCESSORY PROTEIN G"/>
    <property type="match status" value="1"/>
</dbReference>
<dbReference type="Pfam" id="PF02492">
    <property type="entry name" value="cobW"/>
    <property type="match status" value="1"/>
</dbReference>
<dbReference type="PIRSF" id="PIRSF005624">
    <property type="entry name" value="Ni-bind_GTPase"/>
    <property type="match status" value="1"/>
</dbReference>
<dbReference type="SUPFAM" id="SSF52540">
    <property type="entry name" value="P-loop containing nucleoside triphosphate hydrolases"/>
    <property type="match status" value="1"/>
</dbReference>